<feature type="chain" id="PRO_0000090992" description="Elongation factor 1-alpha">
    <location>
        <begin position="1"/>
        <end position="430"/>
    </location>
</feature>
<feature type="domain" description="tr-type G">
    <location>
        <begin position="7"/>
        <end position="219"/>
    </location>
</feature>
<feature type="region of interest" description="G1" evidence="1">
    <location>
        <begin position="16"/>
        <end position="23"/>
    </location>
</feature>
<feature type="region of interest" description="G2" evidence="1">
    <location>
        <begin position="70"/>
        <end position="74"/>
    </location>
</feature>
<feature type="region of interest" description="G3" evidence="1">
    <location>
        <begin position="91"/>
        <end position="94"/>
    </location>
</feature>
<feature type="region of interest" description="G4" evidence="1">
    <location>
        <begin position="146"/>
        <end position="149"/>
    </location>
</feature>
<feature type="region of interest" description="G5" evidence="1">
    <location>
        <begin position="183"/>
        <end position="185"/>
    </location>
</feature>
<feature type="binding site" evidence="2">
    <location>
        <begin position="16"/>
        <end position="23"/>
    </location>
    <ligand>
        <name>GTP</name>
        <dbReference type="ChEBI" id="CHEBI:37565"/>
    </ligand>
</feature>
<feature type="binding site" evidence="2">
    <location>
        <position position="23"/>
    </location>
    <ligand>
        <name>Mg(2+)</name>
        <dbReference type="ChEBI" id="CHEBI:18420"/>
    </ligand>
</feature>
<feature type="binding site" evidence="2">
    <location>
        <begin position="91"/>
        <end position="95"/>
    </location>
    <ligand>
        <name>GTP</name>
        <dbReference type="ChEBI" id="CHEBI:37565"/>
    </ligand>
</feature>
<feature type="binding site" evidence="2">
    <location>
        <begin position="146"/>
        <end position="149"/>
    </location>
    <ligand>
        <name>GTP</name>
        <dbReference type="ChEBI" id="CHEBI:37565"/>
    </ligand>
</feature>
<evidence type="ECO:0000250" key="1"/>
<evidence type="ECO:0000255" key="2">
    <source>
        <dbReference type="HAMAP-Rule" id="MF_00118"/>
    </source>
</evidence>
<protein>
    <recommendedName>
        <fullName evidence="2">Elongation factor 1-alpha</fullName>
        <shortName evidence="2">EF-1-alpha</shortName>
        <ecNumber evidence="2">3.6.5.3</ecNumber>
    </recommendedName>
    <alternativeName>
        <fullName evidence="2">Elongation factor Tu</fullName>
        <shortName evidence="2">EF-Tu</shortName>
    </alternativeName>
</protein>
<gene>
    <name evidence="2" type="primary">tuf</name>
</gene>
<sequence length="430" mass="47923">MKMPKDKPHVNIVFIGHVDHGKSTTIGRLLYDTGNIPEQIIKKFEEMGEKGKSFKFAWVMDRLREERERGITIDVAHTKFETPHRYITIIDAPGHRDFVKNMITGASQADAAVLVVAATDGVMPQTKEHAFLARTLGIKHIIVAINKMDMVNYNQKRFEEVKAQVEKLLKMLGYKDFPVIPISAWEGENVVKKSDKMPWYNGPTLIEALDQIPEPEKPVDKPLRIPIQDVYSIKGVGTVPVGRVETGKLRVGEVVIFEPASTIFHKPIQGEVKSIEMHHEPLEEALPGDNIGFNVRGVSKNDIKRGDVAGHTTNPPTVVRTKDTFKAQIIVLNHPTAITVGYSPVLHAHTAQVPVRFEQLLAKLDPKTGNIVEENPQFIKTGDAAIVILRPMKPVVLEPVKEIPQLGRFAIRDMGMTIAAGMVISIQRGE</sequence>
<reference key="1">
    <citation type="journal article" date="1991" name="J. Mol. Evol.">
        <title>Nucleotide sequence of a DNA region comprising the gene for elongation factor 1 alpha (EF-1 alpha) from the ultrathermophilic archaeote Pyrococcus woesei: phylogenetic implications.</title>
        <authorList>
            <person name="Creti R."/>
            <person name="Citarella F."/>
            <person name="Tiboni O."/>
            <person name="Sanangelantoni A.M."/>
            <person name="Palm P."/>
            <person name="Cammarano P."/>
        </authorList>
    </citation>
    <scope>NUCLEOTIDE SEQUENCE [GENOMIC DNA]</scope>
</reference>
<organism>
    <name type="scientific">Pyrococcus woesei</name>
    <dbReference type="NCBI Taxonomy" id="2262"/>
    <lineage>
        <taxon>Archaea</taxon>
        <taxon>Methanobacteriati</taxon>
        <taxon>Methanobacteriota</taxon>
        <taxon>Thermococci</taxon>
        <taxon>Thermococcales</taxon>
        <taxon>Thermococcaceae</taxon>
        <taxon>Pyrococcus</taxon>
    </lineage>
</organism>
<name>EF1A_PYRWO</name>
<keyword id="KW-0963">Cytoplasm</keyword>
<keyword id="KW-0251">Elongation factor</keyword>
<keyword id="KW-0342">GTP-binding</keyword>
<keyword id="KW-0378">Hydrolase</keyword>
<keyword id="KW-0460">Magnesium</keyword>
<keyword id="KW-0479">Metal-binding</keyword>
<keyword id="KW-0547">Nucleotide-binding</keyword>
<keyword id="KW-0648">Protein biosynthesis</keyword>
<comment type="function">
    <text evidence="2">GTP hydrolase that promotes the GTP-dependent binding of aminoacyl-tRNA to the A-site of ribosomes during protein biosynthesis.</text>
</comment>
<comment type="catalytic activity">
    <reaction evidence="2">
        <text>GTP + H2O = GDP + phosphate + H(+)</text>
        <dbReference type="Rhea" id="RHEA:19669"/>
        <dbReference type="ChEBI" id="CHEBI:15377"/>
        <dbReference type="ChEBI" id="CHEBI:15378"/>
        <dbReference type="ChEBI" id="CHEBI:37565"/>
        <dbReference type="ChEBI" id="CHEBI:43474"/>
        <dbReference type="ChEBI" id="CHEBI:58189"/>
        <dbReference type="EC" id="3.6.5.3"/>
    </reaction>
    <physiologicalReaction direction="left-to-right" evidence="2">
        <dbReference type="Rhea" id="RHEA:19670"/>
    </physiologicalReaction>
</comment>
<comment type="subcellular location">
    <subcellularLocation>
        <location evidence="2">Cytoplasm</location>
    </subcellularLocation>
</comment>
<comment type="similarity">
    <text evidence="2">Belongs to the TRAFAC class translation factor GTPase superfamily. Classic translation factor GTPase family. EF-Tu/EF-1A subfamily.</text>
</comment>
<proteinExistence type="inferred from homology"/>
<dbReference type="EC" id="3.6.5.3" evidence="2"/>
<dbReference type="EMBL" id="X59857">
    <property type="protein sequence ID" value="CAA42517.1"/>
    <property type="molecule type" value="Genomic_DNA"/>
</dbReference>
<dbReference type="PIR" id="S19000">
    <property type="entry name" value="S19000"/>
</dbReference>
<dbReference type="SMR" id="P26751"/>
<dbReference type="GO" id="GO:0005737">
    <property type="term" value="C:cytoplasm"/>
    <property type="evidence" value="ECO:0007669"/>
    <property type="project" value="UniProtKB-SubCell"/>
</dbReference>
<dbReference type="GO" id="GO:0005525">
    <property type="term" value="F:GTP binding"/>
    <property type="evidence" value="ECO:0007669"/>
    <property type="project" value="UniProtKB-UniRule"/>
</dbReference>
<dbReference type="GO" id="GO:0003924">
    <property type="term" value="F:GTPase activity"/>
    <property type="evidence" value="ECO:0007669"/>
    <property type="project" value="InterPro"/>
</dbReference>
<dbReference type="GO" id="GO:0003746">
    <property type="term" value="F:translation elongation factor activity"/>
    <property type="evidence" value="ECO:0007669"/>
    <property type="project" value="UniProtKB-UniRule"/>
</dbReference>
<dbReference type="CDD" id="cd01883">
    <property type="entry name" value="EF1_alpha"/>
    <property type="match status" value="1"/>
</dbReference>
<dbReference type="CDD" id="cd03693">
    <property type="entry name" value="EF1_alpha_II"/>
    <property type="match status" value="1"/>
</dbReference>
<dbReference type="CDD" id="cd03705">
    <property type="entry name" value="EF1_alpha_III"/>
    <property type="match status" value="1"/>
</dbReference>
<dbReference type="FunFam" id="2.40.30.10:FF:000003">
    <property type="entry name" value="Elongation factor 1-alpha"/>
    <property type="match status" value="1"/>
</dbReference>
<dbReference type="FunFam" id="2.40.30.10:FF:000005">
    <property type="entry name" value="Elongation factor 1-alpha"/>
    <property type="match status" value="1"/>
</dbReference>
<dbReference type="Gene3D" id="3.40.50.300">
    <property type="entry name" value="P-loop containing nucleotide triphosphate hydrolases"/>
    <property type="match status" value="1"/>
</dbReference>
<dbReference type="Gene3D" id="2.40.30.10">
    <property type="entry name" value="Translation factors"/>
    <property type="match status" value="2"/>
</dbReference>
<dbReference type="HAMAP" id="MF_00118_A">
    <property type="entry name" value="EF_Tu_A"/>
    <property type="match status" value="1"/>
</dbReference>
<dbReference type="InterPro" id="IPR004161">
    <property type="entry name" value="EFTu-like_2"/>
</dbReference>
<dbReference type="InterPro" id="IPR031157">
    <property type="entry name" value="G_TR_CS"/>
</dbReference>
<dbReference type="InterPro" id="IPR054696">
    <property type="entry name" value="GTP-eEF1A_C"/>
</dbReference>
<dbReference type="InterPro" id="IPR027417">
    <property type="entry name" value="P-loop_NTPase"/>
</dbReference>
<dbReference type="InterPro" id="IPR005225">
    <property type="entry name" value="Small_GTP-bd"/>
</dbReference>
<dbReference type="InterPro" id="IPR000795">
    <property type="entry name" value="T_Tr_GTP-bd_dom"/>
</dbReference>
<dbReference type="InterPro" id="IPR050100">
    <property type="entry name" value="TRAFAC_GTPase_members"/>
</dbReference>
<dbReference type="InterPro" id="IPR009000">
    <property type="entry name" value="Transl_B-barrel_sf"/>
</dbReference>
<dbReference type="InterPro" id="IPR009001">
    <property type="entry name" value="Transl_elong_EF1A/Init_IF2_C"/>
</dbReference>
<dbReference type="InterPro" id="IPR004539">
    <property type="entry name" value="Transl_elong_EF1A_euk/arc"/>
</dbReference>
<dbReference type="NCBIfam" id="TIGR00483">
    <property type="entry name" value="EF-1_alpha"/>
    <property type="match status" value="1"/>
</dbReference>
<dbReference type="NCBIfam" id="NF008969">
    <property type="entry name" value="PRK12317.1"/>
    <property type="match status" value="1"/>
</dbReference>
<dbReference type="NCBIfam" id="TIGR00231">
    <property type="entry name" value="small_GTP"/>
    <property type="match status" value="1"/>
</dbReference>
<dbReference type="PANTHER" id="PTHR23115">
    <property type="entry name" value="TRANSLATION FACTOR"/>
    <property type="match status" value="1"/>
</dbReference>
<dbReference type="Pfam" id="PF22594">
    <property type="entry name" value="GTP-eEF1A_C"/>
    <property type="match status" value="1"/>
</dbReference>
<dbReference type="Pfam" id="PF00009">
    <property type="entry name" value="GTP_EFTU"/>
    <property type="match status" value="1"/>
</dbReference>
<dbReference type="Pfam" id="PF03144">
    <property type="entry name" value="GTP_EFTU_D2"/>
    <property type="match status" value="1"/>
</dbReference>
<dbReference type="PRINTS" id="PR00315">
    <property type="entry name" value="ELONGATNFCT"/>
</dbReference>
<dbReference type="SUPFAM" id="SSF50465">
    <property type="entry name" value="EF-Tu/eEF-1alpha/eIF2-gamma C-terminal domain"/>
    <property type="match status" value="1"/>
</dbReference>
<dbReference type="SUPFAM" id="SSF52540">
    <property type="entry name" value="P-loop containing nucleoside triphosphate hydrolases"/>
    <property type="match status" value="1"/>
</dbReference>
<dbReference type="SUPFAM" id="SSF50447">
    <property type="entry name" value="Translation proteins"/>
    <property type="match status" value="1"/>
</dbReference>
<dbReference type="PROSITE" id="PS00301">
    <property type="entry name" value="G_TR_1"/>
    <property type="match status" value="1"/>
</dbReference>
<dbReference type="PROSITE" id="PS51722">
    <property type="entry name" value="G_TR_2"/>
    <property type="match status" value="1"/>
</dbReference>
<accession>P26751</accession>